<keyword id="KW-0963">Cytoplasm</keyword>
<keyword id="KW-0433">Leucine-rich repeat</keyword>
<keyword id="KW-0514">Muscle protein</keyword>
<keyword id="KW-1185">Reference proteome</keyword>
<keyword id="KW-0677">Repeat</keyword>
<dbReference type="EMBL" id="CR936359">
    <property type="status" value="NOT_ANNOTATED_CDS"/>
    <property type="molecule type" value="Genomic_DNA"/>
</dbReference>
<dbReference type="EMBL" id="BC081474">
    <property type="protein sequence ID" value="AAH81474.1"/>
    <property type="molecule type" value="mRNA"/>
</dbReference>
<dbReference type="EMBL" id="BC093194">
    <property type="protein sequence ID" value="AAH93194.1"/>
    <property type="molecule type" value="mRNA"/>
</dbReference>
<dbReference type="EMBL" id="BC153572">
    <property type="protein sequence ID" value="AAI53573.1"/>
    <property type="molecule type" value="mRNA"/>
</dbReference>
<dbReference type="RefSeq" id="NP_001017760.1">
    <property type="nucleotide sequence ID" value="NM_001017760.1"/>
</dbReference>
<dbReference type="SMR" id="F1R6I3"/>
<dbReference type="FunCoup" id="F1R6I3">
    <property type="interactions" value="2112"/>
</dbReference>
<dbReference type="STRING" id="7955.ENSDARP00000096455"/>
<dbReference type="PaxDb" id="7955-ENSDARP00000096455"/>
<dbReference type="Ensembl" id="ENSDART00000105678">
    <property type="protein sequence ID" value="ENSDARP00000096455"/>
    <property type="gene ID" value="ENSDARG00000071465"/>
</dbReference>
<dbReference type="Ensembl" id="ENSDART00000162685">
    <property type="protein sequence ID" value="ENSDARP00000136641"/>
    <property type="gene ID" value="ENSDARG00000071465"/>
</dbReference>
<dbReference type="Ensembl" id="ENSDART00000188474">
    <property type="protein sequence ID" value="ENSDARP00000154210"/>
    <property type="gene ID" value="ENSDARG00000116738"/>
</dbReference>
<dbReference type="GeneID" id="550456"/>
<dbReference type="KEGG" id="dre:550456"/>
<dbReference type="AGR" id="ZFIN:ZDB-GENE-050417-279"/>
<dbReference type="CTD" id="127495"/>
<dbReference type="ZFIN" id="ZDB-GENE-050417-279">
    <property type="gene designation" value="lrrc39"/>
</dbReference>
<dbReference type="eggNOG" id="KOG0619">
    <property type="taxonomic scope" value="Eukaryota"/>
</dbReference>
<dbReference type="InParanoid" id="F1R6I3"/>
<dbReference type="OMA" id="DMPALEW"/>
<dbReference type="OrthoDB" id="442066at2759"/>
<dbReference type="TreeFam" id="TF333627"/>
<dbReference type="PRO" id="PR:F1R6I3"/>
<dbReference type="Proteomes" id="UP000000437">
    <property type="component" value="Alternate scaffold 22"/>
</dbReference>
<dbReference type="Proteomes" id="UP000000437">
    <property type="component" value="Chromosome 22"/>
</dbReference>
<dbReference type="Bgee" id="ENSDARG00000071465">
    <property type="expression patterns" value="Expressed in heart and 17 other cell types or tissues"/>
</dbReference>
<dbReference type="ExpressionAtlas" id="F1R6I3">
    <property type="expression patterns" value="baseline and differential"/>
</dbReference>
<dbReference type="GO" id="GO:0031430">
    <property type="term" value="C:M band"/>
    <property type="evidence" value="ECO:0007669"/>
    <property type="project" value="UniProtKB-SubCell"/>
</dbReference>
<dbReference type="GO" id="GO:0055008">
    <property type="term" value="P:cardiac muscle tissue morphogenesis"/>
    <property type="evidence" value="ECO:0000315"/>
    <property type="project" value="ZFIN"/>
</dbReference>
<dbReference type="GO" id="GO:0060047">
    <property type="term" value="P:heart contraction"/>
    <property type="evidence" value="ECO:0000315"/>
    <property type="project" value="ZFIN"/>
</dbReference>
<dbReference type="GO" id="GO:0035556">
    <property type="term" value="P:intracellular signal transduction"/>
    <property type="evidence" value="ECO:0000318"/>
    <property type="project" value="GO_Central"/>
</dbReference>
<dbReference type="GO" id="GO:0045214">
    <property type="term" value="P:sarcomere organization"/>
    <property type="evidence" value="ECO:0000315"/>
    <property type="project" value="ZFIN"/>
</dbReference>
<dbReference type="FunFam" id="3.80.10.10:FF:000248">
    <property type="entry name" value="Leucine rich repeat containing 39"/>
    <property type="match status" value="1"/>
</dbReference>
<dbReference type="FunFam" id="3.80.10.10:FF:000249">
    <property type="entry name" value="Leucine rich repeat containing 39"/>
    <property type="match status" value="1"/>
</dbReference>
<dbReference type="Gene3D" id="3.80.10.10">
    <property type="entry name" value="Ribonuclease Inhibitor"/>
    <property type="match status" value="2"/>
</dbReference>
<dbReference type="InterPro" id="IPR001611">
    <property type="entry name" value="Leu-rich_rpt"/>
</dbReference>
<dbReference type="InterPro" id="IPR003591">
    <property type="entry name" value="Leu-rich_rpt_typical-subtyp"/>
</dbReference>
<dbReference type="InterPro" id="IPR032675">
    <property type="entry name" value="LRR_dom_sf"/>
</dbReference>
<dbReference type="InterPro" id="IPR050216">
    <property type="entry name" value="LRR_domain-containing"/>
</dbReference>
<dbReference type="PANTHER" id="PTHR48051">
    <property type="match status" value="1"/>
</dbReference>
<dbReference type="PANTHER" id="PTHR48051:SF2">
    <property type="entry name" value="LEUCINE RICH REPEAT CONTAINING 39"/>
    <property type="match status" value="1"/>
</dbReference>
<dbReference type="Pfam" id="PF13855">
    <property type="entry name" value="LRR_8"/>
    <property type="match status" value="2"/>
</dbReference>
<dbReference type="SMART" id="SM00369">
    <property type="entry name" value="LRR_TYP"/>
    <property type="match status" value="6"/>
</dbReference>
<dbReference type="SUPFAM" id="SSF52058">
    <property type="entry name" value="L domain-like"/>
    <property type="match status" value="1"/>
</dbReference>
<dbReference type="PROSITE" id="PS51450">
    <property type="entry name" value="LRR"/>
    <property type="match status" value="8"/>
</dbReference>
<reference key="1">
    <citation type="journal article" date="2013" name="Nature">
        <title>The zebrafish reference genome sequence and its relationship to the human genome.</title>
        <authorList>
            <person name="Howe K."/>
            <person name="Clark M.D."/>
            <person name="Torroja C.F."/>
            <person name="Torrance J."/>
            <person name="Berthelot C."/>
            <person name="Muffato M."/>
            <person name="Collins J.E."/>
            <person name="Humphray S."/>
            <person name="McLaren K."/>
            <person name="Matthews L."/>
            <person name="McLaren S."/>
            <person name="Sealy I."/>
            <person name="Caccamo M."/>
            <person name="Churcher C."/>
            <person name="Scott C."/>
            <person name="Barrett J.C."/>
            <person name="Koch R."/>
            <person name="Rauch G.J."/>
            <person name="White S."/>
            <person name="Chow W."/>
            <person name="Kilian B."/>
            <person name="Quintais L.T."/>
            <person name="Guerra-Assuncao J.A."/>
            <person name="Zhou Y."/>
            <person name="Gu Y."/>
            <person name="Yen J."/>
            <person name="Vogel J.H."/>
            <person name="Eyre T."/>
            <person name="Redmond S."/>
            <person name="Banerjee R."/>
            <person name="Chi J."/>
            <person name="Fu B."/>
            <person name="Langley E."/>
            <person name="Maguire S.F."/>
            <person name="Laird G.K."/>
            <person name="Lloyd D."/>
            <person name="Kenyon E."/>
            <person name="Donaldson S."/>
            <person name="Sehra H."/>
            <person name="Almeida-King J."/>
            <person name="Loveland J."/>
            <person name="Trevanion S."/>
            <person name="Jones M."/>
            <person name="Quail M."/>
            <person name="Willey D."/>
            <person name="Hunt A."/>
            <person name="Burton J."/>
            <person name="Sims S."/>
            <person name="McLay K."/>
            <person name="Plumb B."/>
            <person name="Davis J."/>
            <person name="Clee C."/>
            <person name="Oliver K."/>
            <person name="Clark R."/>
            <person name="Riddle C."/>
            <person name="Elliot D."/>
            <person name="Threadgold G."/>
            <person name="Harden G."/>
            <person name="Ware D."/>
            <person name="Begum S."/>
            <person name="Mortimore B."/>
            <person name="Kerry G."/>
            <person name="Heath P."/>
            <person name="Phillimore B."/>
            <person name="Tracey A."/>
            <person name="Corby N."/>
            <person name="Dunn M."/>
            <person name="Johnson C."/>
            <person name="Wood J."/>
            <person name="Clark S."/>
            <person name="Pelan S."/>
            <person name="Griffiths G."/>
            <person name="Smith M."/>
            <person name="Glithero R."/>
            <person name="Howden P."/>
            <person name="Barker N."/>
            <person name="Lloyd C."/>
            <person name="Stevens C."/>
            <person name="Harley J."/>
            <person name="Holt K."/>
            <person name="Panagiotidis G."/>
            <person name="Lovell J."/>
            <person name="Beasley H."/>
            <person name="Henderson C."/>
            <person name="Gordon D."/>
            <person name="Auger K."/>
            <person name="Wright D."/>
            <person name="Collins J."/>
            <person name="Raisen C."/>
            <person name="Dyer L."/>
            <person name="Leung K."/>
            <person name="Robertson L."/>
            <person name="Ambridge K."/>
            <person name="Leongamornlert D."/>
            <person name="McGuire S."/>
            <person name="Gilderthorp R."/>
            <person name="Griffiths C."/>
            <person name="Manthravadi D."/>
            <person name="Nichol S."/>
            <person name="Barker G."/>
            <person name="Whitehead S."/>
            <person name="Kay M."/>
            <person name="Brown J."/>
            <person name="Murnane C."/>
            <person name="Gray E."/>
            <person name="Humphries M."/>
            <person name="Sycamore N."/>
            <person name="Barker D."/>
            <person name="Saunders D."/>
            <person name="Wallis J."/>
            <person name="Babbage A."/>
            <person name="Hammond S."/>
            <person name="Mashreghi-Mohammadi M."/>
            <person name="Barr L."/>
            <person name="Martin S."/>
            <person name="Wray P."/>
            <person name="Ellington A."/>
            <person name="Matthews N."/>
            <person name="Ellwood M."/>
            <person name="Woodmansey R."/>
            <person name="Clark G."/>
            <person name="Cooper J."/>
            <person name="Tromans A."/>
            <person name="Grafham D."/>
            <person name="Skuce C."/>
            <person name="Pandian R."/>
            <person name="Andrews R."/>
            <person name="Harrison E."/>
            <person name="Kimberley A."/>
            <person name="Garnett J."/>
            <person name="Fosker N."/>
            <person name="Hall R."/>
            <person name="Garner P."/>
            <person name="Kelly D."/>
            <person name="Bird C."/>
            <person name="Palmer S."/>
            <person name="Gehring I."/>
            <person name="Berger A."/>
            <person name="Dooley C.M."/>
            <person name="Ersan-Urun Z."/>
            <person name="Eser C."/>
            <person name="Geiger H."/>
            <person name="Geisler M."/>
            <person name="Karotki L."/>
            <person name="Kirn A."/>
            <person name="Konantz J."/>
            <person name="Konantz M."/>
            <person name="Oberlander M."/>
            <person name="Rudolph-Geiger S."/>
            <person name="Teucke M."/>
            <person name="Lanz C."/>
            <person name="Raddatz G."/>
            <person name="Osoegawa K."/>
            <person name="Zhu B."/>
            <person name="Rapp A."/>
            <person name="Widaa S."/>
            <person name="Langford C."/>
            <person name="Yang F."/>
            <person name="Schuster S.C."/>
            <person name="Carter N.P."/>
            <person name="Harrow J."/>
            <person name="Ning Z."/>
            <person name="Herrero J."/>
            <person name="Searle S.M."/>
            <person name="Enright A."/>
            <person name="Geisler R."/>
            <person name="Plasterk R.H."/>
            <person name="Lee C."/>
            <person name="Westerfield M."/>
            <person name="de Jong P.J."/>
            <person name="Zon L.I."/>
            <person name="Postlethwait J.H."/>
            <person name="Nusslein-Volhard C."/>
            <person name="Hubbard T.J."/>
            <person name="Roest Crollius H."/>
            <person name="Rogers J."/>
            <person name="Stemple D.L."/>
        </authorList>
    </citation>
    <scope>NUCLEOTIDE SEQUENCE [LARGE SCALE GENOMIC DNA]</scope>
    <source>
        <strain>Tuebingen</strain>
    </source>
</reference>
<reference key="2">
    <citation type="submission" date="2007-09" db="EMBL/GenBank/DDBJ databases">
        <authorList>
            <consortium name="NIH - Zebrafish Gene Collection (ZGC) project"/>
        </authorList>
    </citation>
    <scope>NUCLEOTIDE SEQUENCE [LARGE SCALE MRNA]</scope>
    <source>
        <tissue>Heart</tissue>
    </source>
</reference>
<reference key="3">
    <citation type="journal article" date="2010" name="Circ. Res.">
        <title>Myomasp/LRRC39, a heart- and muscle-specific protein, is a novel component of the sarcomeric M-band and is involved in stretch sensing.</title>
        <authorList>
            <person name="Will R.D."/>
            <person name="Eden M."/>
            <person name="Just S."/>
            <person name="Hansen A."/>
            <person name="Eder A."/>
            <person name="Frank D."/>
            <person name="Kuhn C."/>
            <person name="Seeger T.S."/>
            <person name="Oehl U."/>
            <person name="Wiemann S."/>
            <person name="Korn B."/>
            <person name="Koegl M."/>
            <person name="Rottbauer W."/>
            <person name="Eschenhagen T."/>
            <person name="Katus H.A."/>
            <person name="Frey N."/>
        </authorList>
    </citation>
    <scope>FUNCTION</scope>
    <scope>DISRUPTION PHENOTYPE</scope>
</reference>
<feature type="chain" id="PRO_0000441699" description="Leucine-rich repeat-containing protein 39">
    <location>
        <begin position="1"/>
        <end position="343"/>
    </location>
</feature>
<feature type="repeat" description="LRR 1" evidence="2">
    <location>
        <begin position="64"/>
        <end position="87"/>
    </location>
</feature>
<feature type="repeat" description="LRR 2" evidence="2">
    <location>
        <begin position="88"/>
        <end position="110"/>
    </location>
</feature>
<feature type="repeat" description="LRR 3" evidence="2">
    <location>
        <begin position="111"/>
        <end position="133"/>
    </location>
</feature>
<feature type="repeat" description="LRR 4" evidence="2">
    <location>
        <begin position="134"/>
        <end position="156"/>
    </location>
</feature>
<feature type="repeat" description="LRR 5" evidence="2">
    <location>
        <begin position="158"/>
        <end position="180"/>
    </location>
</feature>
<feature type="repeat" description="LRR 6" evidence="2">
    <location>
        <begin position="181"/>
        <end position="203"/>
    </location>
</feature>
<feature type="repeat" description="LRR 7" evidence="2">
    <location>
        <begin position="204"/>
        <end position="226"/>
    </location>
</feature>
<feature type="repeat" description="LRR 8" evidence="2">
    <location>
        <begin position="228"/>
        <end position="249"/>
    </location>
</feature>
<feature type="repeat" description="LRR 9" evidence="2">
    <location>
        <begin position="250"/>
        <end position="274"/>
    </location>
</feature>
<feature type="repeat" description="LRR 10" evidence="2">
    <location>
        <begin position="275"/>
        <end position="295"/>
    </location>
</feature>
<feature type="sequence conflict" description="In Ref. 2; AAH81474." evidence="5" ref="2">
    <original>I</original>
    <variation>V</variation>
    <location>
        <position position="103"/>
    </location>
</feature>
<feature type="sequence conflict" description="In Ref. 2; AAH93194." evidence="5" ref="2">
    <original>R</original>
    <variation>Q</variation>
    <location>
        <position position="168"/>
    </location>
</feature>
<feature type="sequence conflict" description="In Ref. 2; AAH81474." evidence="5" ref="2">
    <original>W</original>
    <variation>R</variation>
    <location>
        <position position="208"/>
    </location>
</feature>
<feature type="sequence conflict" description="In Ref. 2; AAI53573." evidence="5" ref="2">
    <original>I</original>
    <variation>V</variation>
    <location>
        <position position="215"/>
    </location>
</feature>
<feature type="sequence conflict" description="In Ref. 2; AAH93194." evidence="5" ref="2">
    <original>N</original>
    <variation>D</variation>
    <location>
        <position position="222"/>
    </location>
</feature>
<feature type="sequence conflict" description="In Ref. 2; AAH81474." evidence="5" ref="2">
    <original>T</original>
    <variation>A</variation>
    <location>
        <position position="231"/>
    </location>
</feature>
<proteinExistence type="evidence at transcript level"/>
<evidence type="ECO:0000250" key="1">
    <source>
        <dbReference type="UniProtKB" id="D3ZXS4"/>
    </source>
</evidence>
<evidence type="ECO:0000255" key="2"/>
<evidence type="ECO:0000269" key="3">
    <source>
    </source>
</evidence>
<evidence type="ECO:0000303" key="4">
    <source>
    </source>
</evidence>
<evidence type="ECO:0000305" key="5"/>
<evidence type="ECO:0000312" key="6">
    <source>
        <dbReference type="ZFIN" id="ZDB-GENE-050417-279"/>
    </source>
</evidence>
<protein>
    <recommendedName>
        <fullName evidence="5">Leucine-rich repeat-containing protein 39</fullName>
    </recommendedName>
    <alternativeName>
        <fullName evidence="4">Myosin-interacting M-band-associated stress-responsive protein</fullName>
        <shortName evidence="4">Myomasp</shortName>
    </alternativeName>
</protein>
<name>LRC39_DANRE</name>
<sequence>MTGVTVCCGTVNSIKALWETRIKKTKDDLKKEKEQKDRRAVGRLTGAWEDRIILAKLKEKIVTEEGRVILRIEKEEWKTLPPALVQLSQIQEWQLHRIGLQRIPRFISSFQSLIVLDLSRNSVTEIPKEIGKLTRLRELLLSYNRVSYVPEELGCCENLEKLELAMNRDLDELPTQLSNLKKLSHLDLSMNQFTTIPDCVVNLPSLEWLDMGSNILETLPDNIHRMEKLHTLWLPRNELEYLPDNISRMKSLDTLVLSKNKLRDIPPLMEGMSNLRFVNFRDNPLTYDVTLPDLNEDVEEEENDREMFGREFMNFYIQEARKRGSQNFTSVLNVMLEGVSETA</sequence>
<gene>
    <name evidence="6" type="primary">lrrc39</name>
</gene>
<comment type="function">
    <text evidence="1 3">Component of the sarcomeric M-band which plays a role in myocyte response to biomechanical stress (By similarity). May regulate expression of other M-band proteins via an SRF-dependent pathway (By similarity). Important for normal contractile function in heart (PubMed:20847312).</text>
</comment>
<comment type="subcellular location">
    <subcellularLocation>
        <location evidence="1">Cytoplasm</location>
        <location evidence="1">Myofibril</location>
        <location evidence="1">Sarcomere</location>
        <location evidence="1">M line</location>
    </subcellularLocation>
</comment>
<comment type="disruption phenotype">
    <text evidence="3">Morpholino knockdown of the protein results in severe contractile dysfunction of the heart, leading to pericaridal edema and blood congestion. Heart development and gross cardiac morphology appear to be normal. Cardiomyocytes show some ultrastructural abnormalities including narrowing of the M-band and a poorly defined A-band/M-band transition.</text>
</comment>
<organism>
    <name type="scientific">Danio rerio</name>
    <name type="common">Zebrafish</name>
    <name type="synonym">Brachydanio rerio</name>
    <dbReference type="NCBI Taxonomy" id="7955"/>
    <lineage>
        <taxon>Eukaryota</taxon>
        <taxon>Metazoa</taxon>
        <taxon>Chordata</taxon>
        <taxon>Craniata</taxon>
        <taxon>Vertebrata</taxon>
        <taxon>Euteleostomi</taxon>
        <taxon>Actinopterygii</taxon>
        <taxon>Neopterygii</taxon>
        <taxon>Teleostei</taxon>
        <taxon>Ostariophysi</taxon>
        <taxon>Cypriniformes</taxon>
        <taxon>Danionidae</taxon>
        <taxon>Danioninae</taxon>
        <taxon>Danio</taxon>
    </lineage>
</organism>
<accession>F1R6I3</accession>
<accession>A8E5F1</accession>
<accession>Q567F2</accession>
<accession>Q66I91</accession>